<comment type="function">
    <molecule>Helper component proteinase</molecule>
    <text evidence="16 23 25">Required for aphid transmission and also has proteolytic activity. Only cleaves a Gly-Gly dipeptide at its own C-terminus (PubMed:2656254). Interacts with virions and aphid stylets (PubMed:9880030). Acts as a suppressor of RNA-mediated gene silencing, also known as post-transcriptional gene silencing (PTGS), a mechanism of plant viral defense that limits the accumulation of viral RNAs (PubMed:11414807). May have RNA-binding activity.</text>
</comment>
<comment type="function">
    <molecule>Cytoplasmic inclusion protein</molecule>
    <text>Has helicase activity. It may be involved in replication.</text>
</comment>
<comment type="function">
    <molecule>6 kDa protein 1</molecule>
    <text evidence="3 7">Indispensable for virus replication (By similarity). Reduces the abundance of host transcripts related to jasmonic acid biosynthesis therefore altering the host defenses (By similarity). In order to increase its own stability, decreases host protein degradation pathways (By similarity).</text>
</comment>
<comment type="function">
    <molecule>6 kDa protein 2</molecule>
    <text evidence="2">Indispensable for virus replication.</text>
</comment>
<comment type="function">
    <molecule>Viral genome-linked protein</molecule>
    <text evidence="5 27 28">Mediates the cap-independent, EIF4E-dependent translation of viral genomic RNAs (Probable). Binds to the cap-binding site of host EIF4E and thus interferes with the host EIF4E-dependent mRNA export and translation (By similarity). VPg-RNA directly binds EIF4E and is a template for transcription (By similarity). Also forms trimeric complexes with EIF4E-EIF4G, which are templates for translation (By similarity).</text>
</comment>
<comment type="function">
    <molecule>Nuclear inclusion protein A</molecule>
    <text evidence="22">Has RNA-binding and proteolytic activities.</text>
</comment>
<comment type="function">
    <molecule>Nuclear inclusion protein B</molecule>
    <text>An RNA-dependent RNA polymerase that plays an essential role in the virus replication.</text>
</comment>
<comment type="function">
    <molecule>Capsid protein</molecule>
    <text>Involved in aphid transmission, cell-to-cell and systemis movement, encapsidation of the viral RNA and in the regulation of viral RNA amplification.</text>
</comment>
<comment type="catalytic activity">
    <molecule>Nuclear inclusion protein B</molecule>
    <reaction evidence="9">
        <text>RNA(n) + a ribonucleoside 5'-triphosphate = RNA(n+1) + diphosphate</text>
        <dbReference type="Rhea" id="RHEA:21248"/>
        <dbReference type="Rhea" id="RHEA-COMP:14527"/>
        <dbReference type="Rhea" id="RHEA-COMP:17342"/>
        <dbReference type="ChEBI" id="CHEBI:33019"/>
        <dbReference type="ChEBI" id="CHEBI:61557"/>
        <dbReference type="ChEBI" id="CHEBI:140395"/>
        <dbReference type="EC" id="2.7.7.48"/>
    </reaction>
</comment>
<comment type="catalytic activity">
    <molecule>Nuclear inclusion protein A</molecule>
    <reaction evidence="22">
        <text>Hydrolyzes glutaminyl bonds, and activity is further restricted by preferences for the amino acids in P6 - P1' that vary with the species of potyvirus, e.g. Glu-Xaa-Xaa-Tyr-Xaa-Gln-|-(Ser or Gly) for the enzyme from tobacco etch virus. The natural substrate is the viral polyprotein, but other proteins and oligopeptides containing the appropriate consensus sequence are also cleaved.</text>
        <dbReference type="EC" id="3.4.22.44"/>
    </reaction>
</comment>
<comment type="catalytic activity">
    <molecule>Helper component proteinase</molecule>
    <reaction evidence="23 24">
        <text>Hydrolyzes a Gly-|-Gly bond at its own C-terminus, commonly in the sequence -Tyr-Xaa-Val-Gly-|-Gly, in the processing of the potyviral polyprotein.</text>
        <dbReference type="EC" id="3.4.22.45"/>
    </reaction>
</comment>
<comment type="subunit">
    <molecule>Viral genome-linked protein</molecule>
    <text evidence="5 18 20">Interacts with host eIF4E protein (via cap-binding region); this interaction mediates the translation of the VPg-viral RNA conjugates (By similarity). Part of a complex that comprises VPg, RNA, host EIF4E and EIF4G; this interaction mediates the translation of the VPg-viral RNA conjugates (By similarity). Interaction is possible in susceptible hosts but impaired in resistant plants: the VPg of strain HAT interacts with tomato eIF4E1 and eIF4E2 as well as with Capsicum annuum eIF4E1 susceptible alleles pvr2(+), pvr2(3) and pvr2(9) but not with the resistant allele pvr2(2), the VPg of strain CAA10 interacts with C.annuum eIF4E1 susceptible alleles pvr2(+), pvr2(2), pvr2(3) and pvr2(9), the VPg of strain NW interacts at least with C.annuum eIF4E1 (PubMed:15842624, PubMed:18182024).</text>
</comment>
<comment type="subunit">
    <molecule>Nuclear inclusion protein A</molecule>
    <text evidence="17 19">Homodimer; disulfide-linked.</text>
</comment>
<comment type="subcellular location">
    <molecule>6 kDa protein 1</molecule>
    <subcellularLocation>
        <location>Host cytoplasmic vesicle</location>
    </subcellularLocation>
    <text evidence="3">Probably colocalizes with 6K2-induced vesicles associated with host chloroplasts.</text>
</comment>
<comment type="subcellular location">
    <molecule>6 kDa protein 2</molecule>
    <subcellularLocation>
        <location evidence="2">Host cytoplasmic vesicle</location>
    </subcellularLocation>
    <text evidence="2">6K-induced vesicles associate with host chloroplasts.</text>
</comment>
<comment type="subcellular location">
    <molecule>Viral genome-linked protein</molecule>
    <subcellularLocation>
        <location evidence="6">Host nucleus</location>
    </subcellularLocation>
    <text evidence="6">Binds to host plant eIF4E proteins in the host nucleus.</text>
</comment>
<comment type="subcellular location">
    <molecule>Capsid protein</molecule>
    <subcellularLocation>
        <location evidence="26">Virion</location>
    </subcellularLocation>
</comment>
<comment type="alternative products">
    <event type="ribosomal frameshifting"/>
    <isoform>
        <id>P04517-1</id>
        <name>Genome polyprotein</name>
        <sequence type="displayed"/>
    </isoform>
    <isoform>
        <id>P0CK09-1</id>
        <name>P3N-PIPO polyprotein</name>
        <sequence type="external"/>
    </isoform>
</comment>
<comment type="domain">
    <molecule>Helper component proteinase</molecule>
    <text>The N-terminus is involved in interaction with stylets. The central part is involved in interaction with virions and the C-terminus is involved in cell-to cell movement of the virus.</text>
</comment>
<comment type="PTM">
    <molecule>Viral genome-linked protein</molecule>
    <text evidence="2">VPg is uridylylated by the polymerase and is covalently attached to the 5'-end of the genomic RNA. This uridylylated form acts as a nucleotide-peptide primer for the polymerase (By similarity).</text>
</comment>
<comment type="PTM">
    <molecule>Genome polyprotein</molecule>
    <text evidence="1">Potyviral RNA is expressed as two polyproteins which undergo post-translational proteolytic processing. Genome polyprotein is processed by NIa-pro, P1 and HC-pro proteinases resulting in the production of at least ten individual proteins. P3N-PIPO polyprotein is cleaved by P1 and HC-pro proteinases resulting in the production of three individual proteins. The P1 proteinase and the HC-pro cleave only their respective C-termini autocatalytically. 6K1 is essential for proper proteolytic separation of P3 from CI (By similarity).</text>
</comment>
<comment type="polymorphism">
    <molecule>Viral genome-linked protein</molecule>
    <text evidence="20">Variant of the resistance-breaking strain CAA10 has the ability to contaminate Capsicum annuum plants containing resistant alleles pvr2(+), pvr2(1), pvr2(2), pvr2(3), pvr2(4), pvr2(5), pvr2(6), pvr2(7), pvr2(8) and pvr2(9).</text>
</comment>
<comment type="miscellaneous">
    <molecule>Isoform Genome polyprotein</molecule>
    <text>Produced by conventional translation.</text>
</comment>
<comment type="miscellaneous">
    <molecule>Viral genome-linked protein</molecule>
    <text evidence="20">Displayed sequence is strain HAT which confers the ability to contaminate Capsicum annuum plants containing alleles pvr2(+), pvr2(1), pvr2(3), pvr2(4), pvr2(5), pvr2(6), pvr2(7), pvr2(8) and pvr2(9) but not plants containing the allele pvr2(2).</text>
</comment>
<comment type="similarity">
    <text evidence="26">Belongs to the potyviridae genome polyprotein family.</text>
</comment>
<organismHost>
    <name type="scientific">Capsicum annuum</name>
    <name type="common">Capsicum pepper</name>
    <dbReference type="NCBI Taxonomy" id="4072"/>
</organismHost>
<organismHost>
    <name type="scientific">Cassia</name>
    <dbReference type="NCBI Taxonomy" id="53851"/>
</organismHost>
<organismHost>
    <name type="scientific">Datura stramonium</name>
    <name type="common">Jimsonweed</name>
    <name type="synonym">Common thornapple</name>
    <dbReference type="NCBI Taxonomy" id="4076"/>
</organismHost>
<organismHost>
    <name type="scientific">Nicotiana tabacum</name>
    <name type="common">Common tobacco</name>
    <dbReference type="NCBI Taxonomy" id="4097"/>
</organismHost>
<organismHost>
    <name type="scientific">Physalis</name>
    <dbReference type="NCBI Taxonomy" id="24663"/>
</organismHost>
<organismHost>
    <name type="scientific">Solanum lycopersicum</name>
    <name type="common">Tomato</name>
    <name type="synonym">Lycopersicon esculentum</name>
    <dbReference type="NCBI Taxonomy" id="4081"/>
</organismHost>
<evidence type="ECO:0000250" key="1"/>
<evidence type="ECO:0000250" key="2">
    <source>
        <dbReference type="UniProtKB" id="P09814"/>
    </source>
</evidence>
<evidence type="ECO:0000250" key="3">
    <source>
        <dbReference type="UniProtKB" id="P13529"/>
    </source>
</evidence>
<evidence type="ECO:0000250" key="4">
    <source>
        <dbReference type="UniProtKB" id="P17767"/>
    </source>
</evidence>
<evidence type="ECO:0000250" key="5">
    <source>
        <dbReference type="UniProtKB" id="P18247"/>
    </source>
</evidence>
<evidence type="ECO:0000250" key="6">
    <source>
        <dbReference type="UniProtKB" id="P21231"/>
    </source>
</evidence>
<evidence type="ECO:0000250" key="7">
    <source>
        <dbReference type="UniProtKB" id="P89509"/>
    </source>
</evidence>
<evidence type="ECO:0000255" key="8"/>
<evidence type="ECO:0000255" key="9">
    <source>
        <dbReference type="PROSITE-ProRule" id="PRU00539"/>
    </source>
</evidence>
<evidence type="ECO:0000255" key="10">
    <source>
        <dbReference type="PROSITE-ProRule" id="PRU00541"/>
    </source>
</evidence>
<evidence type="ECO:0000255" key="11">
    <source>
        <dbReference type="PROSITE-ProRule" id="PRU00542"/>
    </source>
</evidence>
<evidence type="ECO:0000255" key="12">
    <source>
        <dbReference type="PROSITE-ProRule" id="PRU00766"/>
    </source>
</evidence>
<evidence type="ECO:0000255" key="13">
    <source>
        <dbReference type="PROSITE-ProRule" id="PRU01080"/>
    </source>
</evidence>
<evidence type="ECO:0000255" key="14">
    <source>
        <dbReference type="PROSITE-ProRule" id="PRU01219"/>
    </source>
</evidence>
<evidence type="ECO:0000256" key="15">
    <source>
        <dbReference type="SAM" id="MobiDB-lite"/>
    </source>
</evidence>
<evidence type="ECO:0000269" key="16">
    <source>
    </source>
</evidence>
<evidence type="ECO:0000269" key="17">
    <source>
    </source>
</evidence>
<evidence type="ECO:0000269" key="18">
    <source>
    </source>
</evidence>
<evidence type="ECO:0000269" key="19">
    <source>
    </source>
</evidence>
<evidence type="ECO:0000269" key="20">
    <source>
    </source>
</evidence>
<evidence type="ECO:0000269" key="21">
    <source>
    </source>
</evidence>
<evidence type="ECO:0000269" key="22">
    <source>
    </source>
</evidence>
<evidence type="ECO:0000269" key="23">
    <source>
    </source>
</evidence>
<evidence type="ECO:0000269" key="24">
    <source>
    </source>
</evidence>
<evidence type="ECO:0000269" key="25">
    <source>
    </source>
</evidence>
<evidence type="ECO:0000305" key="26"/>
<evidence type="ECO:0000305" key="27">
    <source>
    </source>
</evidence>
<evidence type="ECO:0000305" key="28">
    <source>
    </source>
</evidence>
<evidence type="ECO:0007829" key="29">
    <source>
        <dbReference type="PDB" id="1LVM"/>
    </source>
</evidence>
<evidence type="ECO:0007829" key="30">
    <source>
        <dbReference type="PDB" id="1Q31"/>
    </source>
</evidence>
<organism>
    <name type="scientific">Tobacco etch virus</name>
    <name type="common">TEV</name>
    <dbReference type="NCBI Taxonomy" id="12227"/>
    <lineage>
        <taxon>Viruses</taxon>
        <taxon>Riboviria</taxon>
        <taxon>Orthornavirae</taxon>
        <taxon>Pisuviricota</taxon>
        <taxon>Stelpaviricetes</taxon>
        <taxon>Patatavirales</taxon>
        <taxon>Potyviridae</taxon>
        <taxon>Potyvirus</taxon>
        <taxon>Potyvirus nicotianainsculpentis</taxon>
    </lineage>
</organism>
<sequence length="3054" mass="346164">MALIFGTVNANILKEVFGGARMACVTSAHMAGANGSILKKAEETSRAIMHKPVIFGEDYITEADLPYTPLHLEVDAEMERMYYLGRRALTHGKRRKVSVNNKRNRRRKVAKTYVGRDSIVEKIVVPHTERKVDTTAAVEDICNEATTQLVHNSMPKRKKQKNFLPATSLSNVYAQTWSIVRKRHMQVEIISKKSVRARVKRFEGSVQLFASVRHMYGERKRVDLRIDNWQQETLLDLAKRFKNERVDQSKLTFGSSGLVLRQGSYGPAHWYRHGMFIVRGRSDGMLVDARAKVTFAVCHSMTHYSDKSISEAFFIPYSKKFLELRPDGISHECTRGVSVERCGEVAAILTQALSPCGKITCKRCMVETPDIVEGESGESVTNQGKLLAMLKEQYPDFPMAEKLLTRFLQQKSLVNTNLTACVSVKQLIGDRKQAPFTHVLAVSEILFKGNKLTGADLEEASTHMLEIARFLNNRTENMRIGHLGSFRNKISSKAHVNNALMCDNQLDQNGNFIWGLRGAHAKRFLKGFFTEIDPNEGYDKYVIRKHIRGSRKLAIGNLIMSTDFQTLRQQIQGETIERKEIGNHCISMRNGNYVYPCCCVTLEDGKAQYSDLKHPTKRHLVIGNSGDSKYLDLPVLNEEKMYIANEGYCYMNIFFALLVNVKEEDAKDFTKFIRDTIVPKLGAWPTMQDVATACYLLSILYPDVLRAELPRILVDHDNKTMHVLDSYGSRTTGYHMLKMNTTSQLIEFVHSGLESEMKTYNVGGMNRDVVTQGAIEMLIKSIYKPHLMKQLLEEEPYIIVLAIVSPSILIAMYNSGTFEQALQMWLPNTMRLANLAAILSALAQKLTLADLFVQQRNLINEYAQVILDNLIDGVRVNHSLSLAMEIVTIKLATQEMDMALREGGYAVTSEKVHEMLEKNYVKALKDAWDELTWLEKFSAIRHSRKLLKFGRKPLIMKNTVDCGGHIDLSVKSLFKFHLELLKGTISRAVNGGARKVRVAKNAMTKGVFLKIYSMLPDVYKFITVSSVLSLLLTFLFQIDCMIRAHREAKVAAQLQKESEWDNIINRTFQYSKLENPIGYRSTAEERLQSEHPEAFEYYKFCIGKEDLVEQAKQPEIAYFEKIIAFITLVLMAFDAERSDGVFKILNKFKGILSSTEREIIYTQSLDDYVTTFDDNMTINLELNMDELHKTSLPGVTFKQWWNNQISRGNVKPHYRTEGHFMEFTRDTAASVASEISHSPARDFLVRGAVGSGKSTGLPYHLSKRGRVLMLEPTRPLTDNMHKQLRSEPFNCFPTLRMRGKSTFGSSPITVMTSGFALHHFARNIAEVKTYDFVIIDECHVNDASAIAFRNLLFEHEFEGKVLKVSATPPGREVEFTTQFPVKLKIEEALSFQEFVSLQGTGANADVISCGDNILVYVASYNDVDSLGKLLVQKGYKVSKIDGRTMKSGGTEIITEGTSVKKHFIVATNIIENGVTIDIDVVVDFGTKVVPVLDVDNRAVQYNKTVVSYGERIQKLGRVGRHKEGVALRIGQTNKTLVEIPEMVATEAAFLCFMYNLPVTTQSVSTTLLENATLLQARTMAQFELSYFYTINFVRFDGSMHPVIHDKLKRFKLHTCETFLNKLAIPNKGLSSWLTSGEYKRLGYIAEDAGIRIPFVCKEIPDSLHEEIWHIVVAHKGDSGIGRLTSVQAAKVVYTLQTDVHSIARTLACINRRIADEQMKQSHFEAATGRAFSFTNYSIQSIFDTLKANYATKHTKENIAVLQQAKDQLLEFSNLAKDQDVTGIIQDFNHLETIYLQSDSEVAKHLKLKSHWNKSQITRDIIIALSVLIGGGWMLATYFKDKFNEPVYFQGKKNQKHKLKMREARGARGQYEVAAEPEALEHYFGSAYNNKGKRKGTTRGMGAKSRKFINMYGFDPTDFSYIRFVDPLTGHTIDESTNAPIDLVQHEFGKVRTRMLIDDEIEPQSLSTHTTIHAYLVNSGTKKVLKVDLTPHSSLRASEKSTAIMGFPERENELRQTGMAVPVAYDQLPPKNEDLTFEGESLFKGPRDYNPISSTICHLTNESDGHTTSLYGIGFGPFIITNKHLFRRNNGTLLVQSLHGVFKVKNTTTLQQHLIDGRDMIIIRMPKDFPPFPQKLKFREPQREERICLVTTNFQTKSMSSMVSDTSCTFPSSDGIFWKHWIQTKDGQCGSPLVSTRDGFIVGIHSASNFTNTNNYFTSVPKNFMELLTNQEAQQWVSGWRLNADSVLWGGHKVFMSKPEEPFQPVKEATQLMNELVYSQGEKRKWVVEALSGNLRPVAECPSQLVTKHVVKGKCPLFELYLQLNPEKEAYFKPMMGAYKPSRLNREAFLKDILKYASEIEIGNVDCDLLELAISMLVTKLKALGFPTVNYITDPEEIFSALNMKAAMGALYKGKKKEALSELTLDEQEAMLKASCLRLYTGKLGIWNGSLKAELRPIEKVENNKTRTFTAAPIDTLLAGKVCVDDFNNQFYDLNIKAPWTVGMTKFYQGWNELMEALPSGWVYCDADGSQFDSSLTPFLINAVLKVRLAFMEEWDIGEQMLRNLYTEIVYTPILTPDGTIIKKHKGNNSGQPSTVVDNTLMVIIAMLYTCEKCGINKEEIVYYVNGDDLLIAIHPDKAERLSRFKESFGELGLKYEFDCTTRDKTQLWFMSHRALERDGMYIPKLEEERIVSILEWDRSKEPSHRLEAICASMIEAWGYDKLVEEIRNFYAWVLEQAPYSQLAEEGKAPYLAETALKFLYTSQHGTNSEIEEYLKVLYDYDIPTTENLYFQSGTVDAGADAGKKKDQKDDKVAEQASKDRDVNAGTSGTFSVPRINAMATKLQYPRMRGEVVVNLNHLLGYKPQQIDLSNARATHEQFAAWHQAVMTAYGVNEEQMKILLNGFMVWCIENGTSPNLNGTWVMMDGEDQVSYPLKPMVENAQPTLRQIMTHFSDLAEAYIEMRNRERPYMPRYGLQRNITDMSLSRYAFDFYELTSKTPVRAREAHMQMKAAAVRNSGTRLFGLDGNVGTAEEDTERHTAHDVNRNMHTLLGVRQ</sequence>
<reference key="1">
    <citation type="journal article" date="1986" name="Virology">
        <title>The nucleotide sequence of the coding region of tobacco etch virus genomic RNA: evidence for the synthesis of a single polyprotein.</title>
        <authorList>
            <person name="Allison R."/>
            <person name="Johnston R.E."/>
            <person name="Dougherty W.G."/>
        </authorList>
    </citation>
    <scope>NUCLEOTIDE SEQUENCE [GENOMIC RNA]</scope>
</reference>
<reference key="2">
    <citation type="journal article" date="1985" name="Proc. Natl. Acad. Sci. U.S.A.">
        <title>Sequence determination of the capsid protein gene and flanking regions of tobacco etch virus: evidence for synthesis and processing of a polyprotein in potyvirus genome expression.</title>
        <authorList>
            <person name="Allison R.F."/>
            <person name="Sorenson J.C."/>
            <person name="Kelly M.E."/>
            <person name="Armstrong F.B."/>
            <person name="Dougherty W.G."/>
        </authorList>
    </citation>
    <scope>NUCLEOTIDE SEQUENCE [GENOMIC RNA] OF 2344-3054</scope>
</reference>
<reference key="3">
    <citation type="journal article" date="1989" name="EMBO J.">
        <title>A second proteinase encoded by a plant potyvirus genome.</title>
        <authorList>
            <person name="Carrigton J.C."/>
            <person name="Cary S.M."/>
            <person name="Parks T.D."/>
            <person name="Dougherty W.G."/>
        </authorList>
    </citation>
    <scope>CATALYTIC ACTIVITY (HELPER COMPONENT PROTEINASE)</scope>
    <scope>FUNCTION (HELPER COMPONENT PROTEINASE)</scope>
    <scope>PROTEOLYTIC CLEAVAGE (GENOME POLYPROTEIN)</scope>
</reference>
<reference key="4">
    <citation type="journal article" date="1989" name="Virology">
        <title>Identification of essential residues in potyvirus proteinase HC-Pro by site-directed mutagenesis.</title>
        <authorList>
            <person name="Oh C.-S."/>
            <person name="Carrington J.C."/>
        </authorList>
    </citation>
    <scope>ACTIVE SITES (HELPER COMPONENT PROTEINASE)</scope>
    <scope>MUTAGENESIS OF SER-610; HIS-619; SER-625; ASP-627; ASP-632; CYS-649; ASP-675; ASP-689; CYS-694; SER-698; ASP-715; HIS-716; HIS-722; ASP-725; SER-726; SER-729; HIS-735; SER-743 AND SER-755</scope>
    <scope>CATALYTIC ACTIVITY (HELPER COMPONENT PROTEINASE)</scope>
</reference>
<reference key="5">
    <citation type="journal article" date="1989" name="Virology">
        <title>Characterization of the catalytic residues of the tobacco etch virus 49-kDa proteinase.</title>
        <authorList>
            <person name="Dougherty W.G."/>
            <person name="Parks T.D."/>
            <person name="Cary S.M."/>
            <person name="Bazan J.F."/>
            <person name="Fletterick R.J."/>
        </authorList>
    </citation>
    <scope>ACTIVE SITES (NUCLEAR INCLUSION PROTEIN A)</scope>
    <scope>CATALYTIC ACTIVITY (NUCLEAR INCLUSION PROTEIN A)</scope>
    <scope>FUNCTION (NUCLEAR INCLUSION PROTEIN A)</scope>
</reference>
<reference key="6">
    <citation type="journal article" date="1991" name="Virology">
        <title>The 35-kDa protein from the N-terminus of the potyviral polyprotein functions as a third virus-encoded proteinase.</title>
        <authorList>
            <person name="Verchot J."/>
            <person name="Koonin E.V."/>
            <person name="Carrington J.C."/>
        </authorList>
    </citation>
    <scope>ACTIVE SITES (P1 PROTEINASE)</scope>
    <scope>MUTAGENESIS OF HIS-214 AND SER-256</scope>
</reference>
<reference key="7">
    <citation type="journal article" date="1998" name="J. Gen. Virol.">
        <title>Mutations in the potyvirus helper component protein: effects on interactions with virions and aphid stylets.</title>
        <authorList>
            <person name="Blanc S."/>
            <person name="Ammar E.D."/>
            <person name="Garcia-Lampasona S."/>
            <person name="Dolja V.V."/>
            <person name="Llave C."/>
            <person name="Baker J."/>
            <person name="Pirone T.P."/>
        </authorList>
    </citation>
    <scope>FUNCTION (HELPER COMPONENT PROTEINASE)</scope>
    <scope>MUTAGENESIS OF PHE-314 AND LYS-358</scope>
</reference>
<reference key="8">
    <citation type="journal article" date="2001" name="Virology">
        <title>Long-distance movement and replication maintenance functions correlate with silencing suppression activity of potyviral HC-Pro.</title>
        <authorList>
            <person name="Kasschau K.D."/>
            <person name="Carrington J.C."/>
        </authorList>
    </citation>
    <scope>FUNCTION (HELPER COMPONENT PROTEINASE)</scope>
</reference>
<reference key="9">
    <citation type="journal article" date="2001" name="Virus Res.">
        <title>Potyvirus proteins: a wealth of functions.</title>
        <authorList>
            <person name="Urcuqui-Inchima S."/>
            <person name="Haenni A.L."/>
            <person name="Bernardi F."/>
        </authorList>
    </citation>
    <scope>REVIEW</scope>
</reference>
<reference key="10">
    <citation type="journal article" date="2005" name="Plant J.">
        <title>The pvr1 locus in Capsicum encodes a translation initiation factor eIF4E that interacts with Tobacco etch virus VPg.</title>
        <authorList>
            <person name="Kang B.-C."/>
            <person name="Yeam I."/>
            <person name="Frantz J.D."/>
            <person name="Murphy J.F."/>
            <person name="Jahn M.M."/>
        </authorList>
    </citation>
    <scope>INTERACTION WITH HOST EIF4E1 (VIRAL GENOME-LINKED PROTEIN)</scope>
    <source>
        <strain>HAT</strain>
        <strain>NW</strain>
    </source>
</reference>
<reference key="11">
    <citation type="journal article" date="2008" name="Plant J.">
        <title>Natural variation and functional analyses provide evidence for co-evolution between plant eIF4E and potyviral VPg.</title>
        <authorList>
            <person name="Charron C."/>
            <person name="Nicolai M."/>
            <person name="Gallois J.-L."/>
            <person name="Robaglia C."/>
            <person name="Moury B."/>
            <person name="Palloix A."/>
            <person name="Caranta C."/>
        </authorList>
    </citation>
    <scope>VARIANTS LEU-1960; ASP-1961; HIS-1962 AND ASP-1964</scope>
    <scope>INTERACTION WITH HOST EIF4E1 (VIRAL GENOME-LINKED PROTEIN)</scope>
    <source>
        <strain>CAA10</strain>
        <strain>HAT</strain>
    </source>
</reference>
<reference key="12">
    <citation type="journal article" date="2011" name="PLoS ONE">
        <title>Knock-down of both eIF4E1 and eIF4E2 genes confers broad-spectrum resistance against potyviruses in tomato.</title>
        <authorList>
            <person name="Mazier M."/>
            <person name="Flamain F."/>
            <person name="Nicolai M."/>
            <person name="Sarnette V."/>
            <person name="Caranta C."/>
        </authorList>
    </citation>
    <scope>FUNCTION (VIRAL GENOME-LINKED PROTEIN)</scope>
    <source>
        <strain>HAT</strain>
    </source>
</reference>
<reference key="13">
    <citation type="journal article" date="2016" name="J. Gen. Virol.">
        <title>A new eIF4E1 allele characterized by RNAseq data mining is associated with resistance to potato virus Y in tomato albeit with a low durability.</title>
        <authorList>
            <person name="Lebaron C."/>
            <person name="Rosado A."/>
            <person name="Sauvage C."/>
            <person name="Gauffier C."/>
            <person name="German-Retana S."/>
            <person name="Moury B."/>
            <person name="Gallois J.-L."/>
        </authorList>
    </citation>
    <scope>FUNCTION (VIRAL GENOME-LINKED PROTEIN)</scope>
    <source>
        <strain>CAA10</strain>
        <strain>HAT</strain>
        <strain>S103</strain>
    </source>
</reference>
<reference key="14">
    <citation type="journal article" date="2017" name="Genet. Mol. Biol.">
        <title>Translational control in plant antiviral immunity.</title>
        <authorList>
            <person name="Machado J.P.B."/>
            <person name="Calil I.P."/>
            <person name="Santos A.A."/>
            <person name="Fontes E.P.B."/>
        </authorList>
    </citation>
    <scope>REVIEW</scope>
</reference>
<reference key="15">
    <citation type="journal article" date="2002" name="J. Biol. Chem.">
        <title>Structural basis for the substrate specificity of tobacco etch virus protease.</title>
        <authorList>
            <person name="Phan J."/>
            <person name="Zdanov A."/>
            <person name="Evdokimov A.G."/>
            <person name="Tropea J.E."/>
            <person name="Peters H.K. III"/>
            <person name="Kapust R.B."/>
            <person name="Li M."/>
            <person name="Wlodawer A."/>
            <person name="Waugh D.S."/>
        </authorList>
    </citation>
    <scope>X-RAY CRYSTALLOGRAPHY (2.2 ANGSTROMS) OF 2038-2794</scope>
    <scope>SUBUNIT (NUCLEAR INCLUSION PROTEIN A)</scope>
    <scope>DISULFIDE BOND (NUCLEAR INCLUSION PROTEIN A)</scope>
    <scope>MUTAGENESIS OF CYS-2188</scope>
</reference>
<reference key="16">
    <citation type="journal article" date="2005" name="J. Mol. Biol.">
        <title>Crystal structure of tobacco etch virus protease shows the protein C terminus bound within the active site.</title>
        <authorList>
            <person name="Nunn C.M."/>
            <person name="Jeeves M."/>
            <person name="Cliff M.J."/>
            <person name="Urquhart G.T."/>
            <person name="George R.R."/>
            <person name="Chao L.H."/>
            <person name="Tscuchia Y."/>
            <person name="Djordjevic S."/>
        </authorList>
    </citation>
    <scope>X-RAY CRYSTALLOGRAPHY (2.7 ANGSTROMS) OF 2038-2279</scope>
    <scope>SUBUNIT</scope>
    <scope>DISULFIDE BOND (NUCLEAR INCLUSION PROTEIN A)</scope>
    <scope>ACTIVE SITES (NUCLEAR INCLUSION PROTEIN A)</scope>
</reference>
<accession>P04517</accession>
<accession>Q88500</accession>
<accession>Q88501</accession>
<accession>Q88502</accession>
<accession>Q88504</accession>
<accession>Q88505</accession>
<accession>Q88506</accession>
<accession>Q89773</accession>
<name>POLG_TEV</name>
<proteinExistence type="evidence at protein level"/>
<dbReference type="EC" id="3.4.21.-"/>
<dbReference type="EC" id="3.4.22.45" evidence="23 24"/>
<dbReference type="EC" id="3.6.4.-"/>
<dbReference type="EC" id="3.4.22.44" evidence="22"/>
<dbReference type="EC" id="2.7.7.48"/>
<dbReference type="EMBL" id="M15239">
    <property type="protein sequence ID" value="AAA47910.1"/>
    <property type="molecule type" value="Genomic_RNA"/>
</dbReference>
<dbReference type="EMBL" id="M11458">
    <property type="protein sequence ID" value="AAA47909.1"/>
    <property type="molecule type" value="Genomic_RNA"/>
</dbReference>
<dbReference type="EMBL" id="M11216">
    <property type="protein sequence ID" value="AAA47908.1"/>
    <property type="status" value="ALT_SEQ"/>
    <property type="molecule type" value="Genomic_RNA"/>
</dbReference>
<dbReference type="PIR" id="A04207">
    <property type="entry name" value="GNBVEV"/>
</dbReference>
<dbReference type="RefSeq" id="NP_062908.1">
    <molecule id="P04517-1"/>
    <property type="nucleotide sequence ID" value="NC_001555.1"/>
</dbReference>
<dbReference type="PDB" id="1LVB">
    <property type="method" value="X-ray"/>
    <property type="resolution" value="2.20 A"/>
    <property type="chains" value="A/B=2038-2273, C/D=2785-2794"/>
</dbReference>
<dbReference type="PDB" id="1LVM">
    <property type="method" value="X-ray"/>
    <property type="resolution" value="1.80 A"/>
    <property type="chains" value="A/B=2038-2258, C/D=2786-2794, E=2267-2273"/>
</dbReference>
<dbReference type="PDB" id="1Q31">
    <property type="method" value="X-ray"/>
    <property type="resolution" value="2.70 A"/>
    <property type="chains" value="A/B=2038-2279"/>
</dbReference>
<dbReference type="PDB" id="6SUQ">
    <property type="method" value="X-ray"/>
    <property type="resolution" value="3.70 A"/>
    <property type="chains" value="A=2038-2273"/>
</dbReference>
<dbReference type="PDBsum" id="1LVB"/>
<dbReference type="PDBsum" id="1LVM"/>
<dbReference type="PDBsum" id="1Q31"/>
<dbReference type="PDBsum" id="6SUQ"/>
<dbReference type="SMR" id="P04517"/>
<dbReference type="MEROPS" id="C04.004"/>
<dbReference type="MEROPS" id="C06.001"/>
<dbReference type="DNASU" id="1502321"/>
<dbReference type="GeneID" id="1502321"/>
<dbReference type="KEGG" id="vg:1502321"/>
<dbReference type="EvolutionaryTrace" id="P04517"/>
<dbReference type="Proteomes" id="UP000007404">
    <property type="component" value="Genome"/>
</dbReference>
<dbReference type="Proteomes" id="UP000201712">
    <property type="component" value="Genome"/>
</dbReference>
<dbReference type="GO" id="GO:0019029">
    <property type="term" value="C:helical viral capsid"/>
    <property type="evidence" value="ECO:0007669"/>
    <property type="project" value="UniProtKB-KW"/>
</dbReference>
<dbReference type="GO" id="GO:0044161">
    <property type="term" value="C:host cell cytoplasmic vesicle"/>
    <property type="evidence" value="ECO:0007669"/>
    <property type="project" value="UniProtKB-SubCell"/>
</dbReference>
<dbReference type="GO" id="GO:0042025">
    <property type="term" value="C:host cell nucleus"/>
    <property type="evidence" value="ECO:0007669"/>
    <property type="project" value="UniProtKB-SubCell"/>
</dbReference>
<dbReference type="GO" id="GO:0005524">
    <property type="term" value="F:ATP binding"/>
    <property type="evidence" value="ECO:0007669"/>
    <property type="project" value="UniProtKB-KW"/>
</dbReference>
<dbReference type="GO" id="GO:0004197">
    <property type="term" value="F:cysteine-type endopeptidase activity"/>
    <property type="evidence" value="ECO:0007669"/>
    <property type="project" value="InterPro"/>
</dbReference>
<dbReference type="GO" id="GO:0004386">
    <property type="term" value="F:helicase activity"/>
    <property type="evidence" value="ECO:0007669"/>
    <property type="project" value="UniProtKB-KW"/>
</dbReference>
<dbReference type="GO" id="GO:0016818">
    <property type="term" value="F:hydrolase activity, acting on acid anhydrides, in phosphorus-containing anhydrides"/>
    <property type="evidence" value="ECO:0007669"/>
    <property type="project" value="InterPro"/>
</dbReference>
<dbReference type="GO" id="GO:0003723">
    <property type="term" value="F:RNA binding"/>
    <property type="evidence" value="ECO:0007669"/>
    <property type="project" value="InterPro"/>
</dbReference>
<dbReference type="GO" id="GO:0003968">
    <property type="term" value="F:RNA-directed RNA polymerase activity"/>
    <property type="evidence" value="ECO:0007669"/>
    <property type="project" value="UniProtKB-KW"/>
</dbReference>
<dbReference type="GO" id="GO:0008236">
    <property type="term" value="F:serine-type peptidase activity"/>
    <property type="evidence" value="ECO:0007669"/>
    <property type="project" value="UniProtKB-KW"/>
</dbReference>
<dbReference type="GO" id="GO:0005198">
    <property type="term" value="F:structural molecule activity"/>
    <property type="evidence" value="ECO:0007669"/>
    <property type="project" value="InterPro"/>
</dbReference>
<dbReference type="GO" id="GO:0006351">
    <property type="term" value="P:DNA-templated transcription"/>
    <property type="evidence" value="ECO:0007669"/>
    <property type="project" value="InterPro"/>
</dbReference>
<dbReference type="GO" id="GO:0006508">
    <property type="term" value="P:proteolysis"/>
    <property type="evidence" value="ECO:0007669"/>
    <property type="project" value="UniProtKB-KW"/>
</dbReference>
<dbReference type="GO" id="GO:0052170">
    <property type="term" value="P:symbiont-mediated suppression of host innate immune response"/>
    <property type="evidence" value="ECO:0007669"/>
    <property type="project" value="UniProtKB-KW"/>
</dbReference>
<dbReference type="GO" id="GO:0039694">
    <property type="term" value="P:viral RNA genome replication"/>
    <property type="evidence" value="ECO:0007669"/>
    <property type="project" value="InterPro"/>
</dbReference>
<dbReference type="GO" id="GO:0075523">
    <property type="term" value="P:viral translational frameshifting"/>
    <property type="evidence" value="ECO:0007669"/>
    <property type="project" value="UniProtKB-KW"/>
</dbReference>
<dbReference type="CDD" id="cd23175">
    <property type="entry name" value="ps-ssRNAv_Potyviridae_RdRp"/>
    <property type="match status" value="1"/>
</dbReference>
<dbReference type="Gene3D" id="3.30.505.20">
    <property type="match status" value="1"/>
</dbReference>
<dbReference type="Gene3D" id="3.30.70.270">
    <property type="match status" value="1"/>
</dbReference>
<dbReference type="Gene3D" id="3.90.70.150">
    <property type="entry name" value="Helper component proteinase"/>
    <property type="match status" value="1"/>
</dbReference>
<dbReference type="Gene3D" id="3.40.50.300">
    <property type="entry name" value="P-loop containing nucleotide triphosphate hydrolases"/>
    <property type="match status" value="2"/>
</dbReference>
<dbReference type="Gene3D" id="2.40.10.10">
    <property type="entry name" value="Trypsin-like serine proteases"/>
    <property type="match status" value="2"/>
</dbReference>
<dbReference type="InterPro" id="IPR011545">
    <property type="entry name" value="DEAD/DEAH_box_helicase_dom"/>
</dbReference>
<dbReference type="InterPro" id="IPR043502">
    <property type="entry name" value="DNA/RNA_pol_sf"/>
</dbReference>
<dbReference type="InterPro" id="IPR001456">
    <property type="entry name" value="HC-pro"/>
</dbReference>
<dbReference type="InterPro" id="IPR031159">
    <property type="entry name" value="HC_PRO_CPD_dom"/>
</dbReference>
<dbReference type="InterPro" id="IPR042308">
    <property type="entry name" value="HC_PRO_CPD_sf"/>
</dbReference>
<dbReference type="InterPro" id="IPR014001">
    <property type="entry name" value="Helicase_ATP-bd"/>
</dbReference>
<dbReference type="InterPro" id="IPR001650">
    <property type="entry name" value="Helicase_C-like"/>
</dbReference>
<dbReference type="InterPro" id="IPR027417">
    <property type="entry name" value="P-loop_NTPase"/>
</dbReference>
<dbReference type="InterPro" id="IPR002540">
    <property type="entry name" value="Pept_S30_P1_potyvir"/>
</dbReference>
<dbReference type="InterPro" id="IPR009003">
    <property type="entry name" value="Peptidase_S1_PA"/>
</dbReference>
<dbReference type="InterPro" id="IPR043504">
    <property type="entry name" value="Peptidase_S1_PA_chymotrypsin"/>
</dbReference>
<dbReference type="InterPro" id="IPR001592">
    <property type="entry name" value="Poty_coat"/>
</dbReference>
<dbReference type="InterPro" id="IPR001730">
    <property type="entry name" value="Potyv_NIa-pro_dom"/>
</dbReference>
<dbReference type="InterPro" id="IPR039560">
    <property type="entry name" value="Potyvirid-P3"/>
</dbReference>
<dbReference type="InterPro" id="IPR013648">
    <property type="entry name" value="PP_Potyviridae"/>
</dbReference>
<dbReference type="InterPro" id="IPR043128">
    <property type="entry name" value="Rev_trsase/Diguanyl_cyclase"/>
</dbReference>
<dbReference type="InterPro" id="IPR001205">
    <property type="entry name" value="RNA-dir_pol_C"/>
</dbReference>
<dbReference type="InterPro" id="IPR007094">
    <property type="entry name" value="RNA-dir_pol_PSvirus"/>
</dbReference>
<dbReference type="PANTHER" id="PTHR43519">
    <property type="entry name" value="ATP-DEPENDENT RNA HELICASE HRPB"/>
    <property type="match status" value="1"/>
</dbReference>
<dbReference type="PANTHER" id="PTHR43519:SF1">
    <property type="entry name" value="ATP-DEPENDENT RNA HELICASE HRPB"/>
    <property type="match status" value="1"/>
</dbReference>
<dbReference type="Pfam" id="PF00270">
    <property type="entry name" value="DEAD"/>
    <property type="match status" value="1"/>
</dbReference>
<dbReference type="Pfam" id="PF00271">
    <property type="entry name" value="Helicase_C"/>
    <property type="match status" value="1"/>
</dbReference>
<dbReference type="Pfam" id="PF00863">
    <property type="entry name" value="Peptidase_C4"/>
    <property type="match status" value="1"/>
</dbReference>
<dbReference type="Pfam" id="PF00851">
    <property type="entry name" value="Peptidase_C6"/>
    <property type="match status" value="1"/>
</dbReference>
<dbReference type="Pfam" id="PF01577">
    <property type="entry name" value="Peptidase_S30"/>
    <property type="match status" value="1"/>
</dbReference>
<dbReference type="Pfam" id="PF00767">
    <property type="entry name" value="Poty_coat"/>
    <property type="match status" value="1"/>
</dbReference>
<dbReference type="Pfam" id="PF08440">
    <property type="entry name" value="Poty_PP"/>
    <property type="match status" value="1"/>
</dbReference>
<dbReference type="Pfam" id="PF13608">
    <property type="entry name" value="Potyvirid-P3"/>
    <property type="match status" value="1"/>
</dbReference>
<dbReference type="Pfam" id="PF00680">
    <property type="entry name" value="RdRP_1"/>
    <property type="match status" value="1"/>
</dbReference>
<dbReference type="PRINTS" id="PR00966">
    <property type="entry name" value="NIAPOTYPTASE"/>
</dbReference>
<dbReference type="SMART" id="SM00487">
    <property type="entry name" value="DEXDc"/>
    <property type="match status" value="1"/>
</dbReference>
<dbReference type="SMART" id="SM00490">
    <property type="entry name" value="HELICc"/>
    <property type="match status" value="1"/>
</dbReference>
<dbReference type="SUPFAM" id="SSF56672">
    <property type="entry name" value="DNA/RNA polymerases"/>
    <property type="match status" value="1"/>
</dbReference>
<dbReference type="SUPFAM" id="SSF52540">
    <property type="entry name" value="P-loop containing nucleoside triphosphate hydrolases"/>
    <property type="match status" value="2"/>
</dbReference>
<dbReference type="SUPFAM" id="SSF50494">
    <property type="entry name" value="Trypsin-like serine proteases"/>
    <property type="match status" value="1"/>
</dbReference>
<dbReference type="PROSITE" id="PS51744">
    <property type="entry name" value="HC_PRO_CPD"/>
    <property type="match status" value="1"/>
</dbReference>
<dbReference type="PROSITE" id="PS51192">
    <property type="entry name" value="HELICASE_ATP_BIND_1"/>
    <property type="match status" value="1"/>
</dbReference>
<dbReference type="PROSITE" id="PS51194">
    <property type="entry name" value="HELICASE_CTER"/>
    <property type="match status" value="1"/>
</dbReference>
<dbReference type="PROSITE" id="PS51436">
    <property type="entry name" value="POTYVIRUS_NIA_PRO"/>
    <property type="match status" value="1"/>
</dbReference>
<dbReference type="PROSITE" id="PS51871">
    <property type="entry name" value="PV_P1_PRO"/>
    <property type="match status" value="1"/>
</dbReference>
<dbReference type="PROSITE" id="PS50507">
    <property type="entry name" value="RDRP_SSRNA_POS"/>
    <property type="match status" value="1"/>
</dbReference>
<feature type="chain" id="PRO_0000420026" description="Genome polyprotein">
    <location>
        <begin position="1"/>
        <end position="3054"/>
    </location>
</feature>
<feature type="chain" id="PRO_0000040450" description="P1 protease" evidence="8">
    <location>
        <begin position="1"/>
        <end position="304"/>
    </location>
</feature>
<feature type="chain" id="PRO_0000040451" description="Helper component proteinase" evidence="8">
    <location>
        <begin position="305"/>
        <end position="763"/>
    </location>
</feature>
<feature type="chain" id="PRO_0000040452" description="Protein P3" evidence="1">
    <location>
        <begin position="764"/>
        <end position="1110"/>
    </location>
</feature>
<feature type="chain" id="PRO_0000040453" description="6 kDa protein 1" evidence="1">
    <location>
        <begin position="1111"/>
        <end position="1163"/>
    </location>
</feature>
<feature type="chain" id="PRO_0000040454" description="Cytoplasmic inclusion protein">
    <location>
        <begin position="1164"/>
        <end position="1796"/>
    </location>
</feature>
<feature type="chain" id="PRO_0000040455" description="6 kDa protein 2">
    <location>
        <begin position="1797"/>
        <end position="1849"/>
    </location>
</feature>
<feature type="chain" id="PRO_0000040456" description="Viral genome-linked protein" evidence="1">
    <location>
        <begin position="1850"/>
        <end position="2037"/>
    </location>
</feature>
<feature type="chain" id="PRO_0000040457" description="Nuclear inclusion protein A" evidence="1">
    <location>
        <begin position="2038"/>
        <end position="2279"/>
    </location>
</feature>
<feature type="chain" id="PRO_0000040458" description="Nuclear inclusion protein B">
    <location>
        <begin position="2280"/>
        <end position="2791"/>
    </location>
</feature>
<feature type="chain" id="PRO_0000040459" description="Capsid protein">
    <location>
        <begin position="2792"/>
        <end position="3054"/>
    </location>
</feature>
<feature type="domain" description="Peptidase S30" evidence="14">
    <location>
        <begin position="163"/>
        <end position="304"/>
    </location>
</feature>
<feature type="domain" description="Peptidase C6" evidence="13">
    <location>
        <begin position="641"/>
        <end position="763"/>
    </location>
</feature>
<feature type="domain" description="Helicase ATP-binding" evidence="10">
    <location>
        <begin position="1234"/>
        <end position="1386"/>
    </location>
</feature>
<feature type="domain" description="Helicase C-terminal" evidence="11">
    <location>
        <begin position="1401"/>
        <end position="1564"/>
    </location>
</feature>
<feature type="domain" description="Peptidase C4" evidence="12">
    <location>
        <begin position="2038"/>
        <end position="2255"/>
    </location>
</feature>
<feature type="domain" description="RdRp catalytic" evidence="9">
    <location>
        <begin position="2521"/>
        <end position="2641"/>
    </location>
</feature>
<feature type="region of interest" description="Disordered" evidence="15">
    <location>
        <begin position="2798"/>
        <end position="2827"/>
    </location>
</feature>
<feature type="short sequence motif" description="Involved in interaction with stylet and aphid transmission">
    <location>
        <begin position="358"/>
        <end position="361"/>
    </location>
</feature>
<feature type="short sequence motif" description="Involved in virions binding and aphid transmission" evidence="1">
    <location>
        <begin position="615"/>
        <end position="617"/>
    </location>
</feature>
<feature type="short sequence motif" description="DECH box">
    <location>
        <begin position="1336"/>
        <end position="1339"/>
    </location>
</feature>
<feature type="short sequence motif" description="Nuclear localization signal" evidence="8">
    <location>
        <begin position="1889"/>
        <end position="1896"/>
    </location>
</feature>
<feature type="compositionally biased region" description="Basic and acidic residues" evidence="15">
    <location>
        <begin position="2801"/>
        <end position="2822"/>
    </location>
</feature>
<feature type="active site" description="For P1 proteinase activity" evidence="14 21">
    <location>
        <position position="214"/>
    </location>
</feature>
<feature type="active site" description="For P1 proteinase activity" evidence="14">
    <location>
        <position position="223"/>
    </location>
</feature>
<feature type="active site" description="For P1 proteinase activity" evidence="14 21">
    <location>
        <position position="256"/>
    </location>
</feature>
<feature type="active site" description="For helper component proteinase activity" evidence="13">
    <location>
        <position position="649"/>
    </location>
</feature>
<feature type="active site" description="For helper component proteinase activity" evidence="13">
    <location>
        <position position="722"/>
    </location>
</feature>
<feature type="active site" description="For nuclear inclusion protein A activity" evidence="22">
    <location>
        <position position="2083"/>
    </location>
</feature>
<feature type="active site" description="For nuclear inclusion protein A activity" evidence="22">
    <location>
        <position position="2118"/>
    </location>
</feature>
<feature type="active site" description="For nuclear inclusion protein A activity" evidence="22">
    <location>
        <position position="2188"/>
    </location>
</feature>
<feature type="binding site" evidence="10">
    <location>
        <begin position="1247"/>
        <end position="1254"/>
    </location>
    <ligand>
        <name>ATP</name>
        <dbReference type="ChEBI" id="CHEBI:30616"/>
    </ligand>
</feature>
<feature type="site" description="Cleavage; by P1 proteinase" evidence="14">
    <location>
        <begin position="304"/>
        <end position="305"/>
    </location>
</feature>
<feature type="site" description="Cleavage; by autolysis" evidence="13 23">
    <location>
        <begin position="763"/>
        <end position="764"/>
    </location>
</feature>
<feature type="site" description="Cleavage; by NIa-pro" evidence="5">
    <location>
        <begin position="1110"/>
        <end position="1111"/>
    </location>
</feature>
<feature type="site" description="Cleavage; by NIa-pro" evidence="5">
    <location>
        <begin position="1163"/>
        <end position="1164"/>
    </location>
</feature>
<feature type="site" description="Cleavage; by NIa-pro" evidence="5">
    <location>
        <begin position="1796"/>
        <end position="1797"/>
    </location>
</feature>
<feature type="site" description="Cleavage; by NIa-pro" evidence="5">
    <location>
        <begin position="1849"/>
        <end position="1850"/>
    </location>
</feature>
<feature type="site" description="Cleavage; by NIa-pro" evidence="5">
    <location>
        <begin position="2037"/>
        <end position="2038"/>
    </location>
</feature>
<feature type="site" description="Cleavage; by NIa-pro" evidence="5">
    <location>
        <begin position="2279"/>
        <end position="2280"/>
    </location>
</feature>
<feature type="site" description="Cleavage; by NIa-pro" evidence="5">
    <location>
        <begin position="2791"/>
        <end position="2792"/>
    </location>
</feature>
<feature type="modified residue" description="O-(5'-phospho-RNA)-tyrosine" evidence="2">
    <location>
        <position position="1911"/>
    </location>
</feature>
<feature type="modified residue" description="Phosphothreonine" evidence="4">
    <location>
        <position position="3038"/>
    </location>
</feature>
<feature type="disulfide bond" description="Interchain" evidence="17 19">
    <location>
        <position position="2167"/>
    </location>
</feature>
<feature type="sequence variant" description="In strain: CAA10." evidence="20">
    <original>I</original>
    <variation>L</variation>
    <location>
        <position position="1960"/>
    </location>
</feature>
<feature type="sequence variant" description="In strain: CAA10." evidence="20">
    <original>E</original>
    <variation>D</variation>
    <location>
        <position position="1961"/>
    </location>
</feature>
<feature type="sequence variant" description="In strain: CAA10." evidence="20">
    <original>P</original>
    <variation>H</variation>
    <location>
        <position position="1962"/>
    </location>
</feature>
<feature type="sequence variant" description="In strain: CAA10." evidence="20">
    <original>S</original>
    <variation>D</variation>
    <location>
        <position position="1964"/>
    </location>
</feature>
<feature type="mutagenesis site" description="Complete loss of proteolytic activity of P1 proteinase." evidence="21">
    <original>H</original>
    <variation>A</variation>
    <location>
        <position position="214"/>
    </location>
</feature>
<feature type="mutagenesis site" description="Complete loss of proteolytic activity of P1 proteinase." evidence="21">
    <original>S</original>
    <variation>A</variation>
    <location>
        <position position="256"/>
    </location>
</feature>
<feature type="mutagenesis site" description="Complete loss of aphid transmission." evidence="25">
    <original>F</original>
    <variation>L</variation>
    <location>
        <position position="314"/>
    </location>
</feature>
<feature type="mutagenesis site" description="Complete loss of interaction with stylet and aphid transmission; no effect on virion binding." evidence="25">
    <original>K</original>
    <variation>E</variation>
    <location>
        <position position="358"/>
    </location>
</feature>
<feature type="mutagenesis site" description="No effect on proteolytic activity of HC-pro." evidence="24">
    <original>S</original>
    <variation>T</variation>
    <location>
        <position position="610"/>
    </location>
</feature>
<feature type="mutagenesis site" description="No effect on proteolytic activity of HC-pro." evidence="24">
    <original>H</original>
    <variation>S</variation>
    <location>
        <position position="619"/>
    </location>
</feature>
<feature type="mutagenesis site" description="No effect on proteolytic activity of HC-pro." evidence="24">
    <original>S</original>
    <variation>T</variation>
    <location>
        <position position="625"/>
    </location>
</feature>
<feature type="mutagenesis site" description="No effect on proteolytic activity of HC-pro." evidence="24">
    <original>D</original>
    <variation>E</variation>
    <location>
        <position position="627"/>
    </location>
</feature>
<feature type="mutagenesis site" description="No effect on proteolytic activity of HC-pro." evidence="24">
    <original>D</original>
    <variation>E</variation>
    <location>
        <position position="632"/>
    </location>
</feature>
<feature type="mutagenesis site" description="Complete loss of proteolytic activity of HC-pro." evidence="24">
    <original>C</original>
    <variation>S</variation>
    <location>
        <position position="649"/>
    </location>
</feature>
<feature type="mutagenesis site" description="No effect on proteolytic activity of HC-pro." evidence="24">
    <original>D</original>
    <variation>E</variation>
    <location>
        <position position="675"/>
    </location>
</feature>
<feature type="mutagenesis site" description="No effect on proteolytic activity of HC-pro." evidence="24">
    <original>D</original>
    <variation>E</variation>
    <location>
        <position position="689"/>
    </location>
</feature>
<feature type="mutagenesis site" description="No effect on proteolytic activity of HC-pro." evidence="24">
    <original>C</original>
    <variation>S</variation>
    <location>
        <position position="694"/>
    </location>
</feature>
<feature type="mutagenesis site" description="No effect on proteolytic activity of HC-pro." evidence="24">
    <original>S</original>
    <variation>T</variation>
    <location>
        <position position="698"/>
    </location>
</feature>
<feature type="mutagenesis site" description="No effect on proteolytic activity of HC-pro." evidence="24">
    <original>D</original>
    <variation>E</variation>
    <location>
        <position position="715"/>
    </location>
</feature>
<feature type="mutagenesis site" description="No effect on proteolytic activity of HC-pro." evidence="24">
    <original>H</original>
    <variation>S</variation>
    <location>
        <position position="716"/>
    </location>
</feature>
<feature type="mutagenesis site" description="Complete loss of proteolytic activity of HC-pro." evidence="24">
    <original>H</original>
    <variation>S</variation>
    <location>
        <position position="722"/>
    </location>
</feature>
<feature type="mutagenesis site" description="No effect on proteolytic activity of HC-pro." evidence="24">
    <original>D</original>
    <variation>E</variation>
    <location>
        <position position="725"/>
    </location>
</feature>
<feature type="mutagenesis site" description="No effect on proteolytic activity of HC-pro." evidence="24">
    <original>S</original>
    <variation>T</variation>
    <location>
        <position position="726"/>
    </location>
</feature>
<feature type="mutagenesis site" description="No effect on proteolytic activity of HC-pro.">
    <original>S</original>
    <variation>T</variation>
    <location>
        <position position="729"/>
    </location>
</feature>
<feature type="mutagenesis site" description="No effect on proteolytic activity of HC-pro." evidence="24">
    <original>H</original>
    <variation>S</variation>
    <location>
        <position position="735"/>
    </location>
</feature>
<feature type="mutagenesis site" description="No effect on proteolytic activity of HC-pro." evidence="24">
    <original>S</original>
    <variation>T</variation>
    <location>
        <position position="743"/>
    </location>
</feature>
<feature type="mutagenesis site" description="No effect on proteolytic activity of HC-pro." evidence="24">
    <original>S</original>
    <variation>T</variation>
    <location>
        <position position="755"/>
    </location>
</feature>
<feature type="mutagenesis site" description="Complete loss of NIa-pro activity." evidence="17">
    <original>C</original>
    <variation>A</variation>
    <location>
        <position position="2188"/>
    </location>
</feature>
<feature type="helix" evidence="29">
    <location>
        <begin position="2038"/>
        <end position="2040"/>
    </location>
</feature>
<feature type="helix" evidence="29">
    <location>
        <begin position="2049"/>
        <end position="2052"/>
    </location>
</feature>
<feature type="strand" evidence="29">
    <location>
        <begin position="2055"/>
        <end position="2062"/>
    </location>
</feature>
<feature type="strand" evidence="29">
    <location>
        <begin position="2065"/>
        <end position="2074"/>
    </location>
</feature>
<feature type="strand" evidence="29">
    <location>
        <begin position="2077"/>
        <end position="2080"/>
    </location>
</feature>
<feature type="helix" evidence="29">
    <location>
        <begin position="2082"/>
        <end position="2086"/>
    </location>
</feature>
<feature type="strand" evidence="29">
    <location>
        <begin position="2089"/>
        <end position="2096"/>
    </location>
</feature>
<feature type="strand" evidence="29">
    <location>
        <begin position="2099"/>
        <end position="2104"/>
    </location>
</feature>
<feature type="helix" evidence="29">
    <location>
        <begin position="2106"/>
        <end position="2108"/>
    </location>
</feature>
<feature type="strand" evidence="29">
    <location>
        <begin position="2109"/>
        <end position="2113"/>
    </location>
</feature>
<feature type="strand" evidence="29">
    <location>
        <begin position="2120"/>
        <end position="2123"/>
    </location>
</feature>
<feature type="strand" evidence="29">
    <location>
        <begin position="2145"/>
        <end position="2152"/>
    </location>
</feature>
<feature type="strand" evidence="29">
    <location>
        <begin position="2154"/>
        <end position="2157"/>
    </location>
</feature>
<feature type="strand" evidence="29">
    <location>
        <begin position="2159"/>
        <end position="2162"/>
    </location>
</feature>
<feature type="strand" evidence="29">
    <location>
        <begin position="2169"/>
        <end position="2171"/>
    </location>
</feature>
<feature type="turn" evidence="29">
    <location>
        <begin position="2172"/>
        <end position="2175"/>
    </location>
</feature>
<feature type="strand" evidence="29">
    <location>
        <begin position="2176"/>
        <end position="2179"/>
    </location>
</feature>
<feature type="strand" evidence="29">
    <location>
        <begin position="2191"/>
        <end position="2194"/>
    </location>
</feature>
<feature type="turn" evidence="29">
    <location>
        <begin position="2195"/>
        <end position="2197"/>
    </location>
</feature>
<feature type="strand" evidence="29">
    <location>
        <begin position="2200"/>
        <end position="2208"/>
    </location>
</feature>
<feature type="strand" evidence="30">
    <location>
        <begin position="2209"/>
        <end position="2211"/>
    </location>
</feature>
<feature type="strand" evidence="29">
    <location>
        <begin position="2213"/>
        <end position="2218"/>
    </location>
</feature>
<feature type="helix" evidence="29">
    <location>
        <begin position="2223"/>
        <end position="2228"/>
    </location>
</feature>
<feature type="helix" evidence="29">
    <location>
        <begin position="2230"/>
        <end position="2232"/>
    </location>
</feature>
<feature type="strand" evidence="29">
    <location>
        <begin position="2235"/>
        <end position="2238"/>
    </location>
</feature>
<feature type="strand" evidence="29">
    <location>
        <begin position="2243"/>
        <end position="2248"/>
    </location>
</feature>
<feature type="strand" evidence="29">
    <location>
        <begin position="2251"/>
        <end position="2256"/>
    </location>
</feature>
<feature type="strand" evidence="30">
    <location>
        <begin position="2276"/>
        <end position="2278"/>
    </location>
</feature>
<feature type="strand" evidence="29">
    <location>
        <begin position="2788"/>
        <end position="2790"/>
    </location>
</feature>
<keyword id="KW-0002">3D-structure</keyword>
<keyword id="KW-0067">ATP-binding</keyword>
<keyword id="KW-0167">Capsid protein</keyword>
<keyword id="KW-0191">Covalent protein-RNA linkage</keyword>
<keyword id="KW-1015">Disulfide bond</keyword>
<keyword id="KW-1139">Helical capsid protein</keyword>
<keyword id="KW-0347">Helicase</keyword>
<keyword id="KW-1036">Host cytoplasmic vesicle</keyword>
<keyword id="KW-1048">Host nucleus</keyword>
<keyword id="KW-0945">Host-virus interaction</keyword>
<keyword id="KW-0378">Hydrolase</keyword>
<keyword id="KW-1090">Inhibition of host innate immune response by virus</keyword>
<keyword id="KW-0547">Nucleotide-binding</keyword>
<keyword id="KW-0548">Nucleotidyltransferase</keyword>
<keyword id="KW-0597">Phosphoprotein</keyword>
<keyword id="KW-0645">Protease</keyword>
<keyword id="KW-0688">Ribosomal frameshifting</keyword>
<keyword id="KW-0696">RNA-directed RNA polymerase</keyword>
<keyword id="KW-0720">Serine protease</keyword>
<keyword id="KW-0941">Suppressor of RNA silencing</keyword>
<keyword id="KW-0788">Thiol protease</keyword>
<keyword id="KW-0808">Transferase</keyword>
<keyword id="KW-0899">Viral immunoevasion</keyword>
<keyword id="KW-0693">Viral RNA replication</keyword>
<keyword id="KW-0946">Virion</keyword>
<protein>
    <recommendedName>
        <fullName>Genome polyprotein</fullName>
    </recommendedName>
    <component>
        <recommendedName>
            <fullName>P1 protease</fullName>
            <ecNumber>3.4.21.-</ecNumber>
        </recommendedName>
        <alternativeName>
            <fullName>Leader protease P1</fullName>
        </alternativeName>
        <alternativeName>
            <fullName>N-terminal protein</fullName>
        </alternativeName>
        <alternativeName>
            <fullName>P1 proteinase</fullName>
        </alternativeName>
    </component>
    <component>
        <recommendedName>
            <fullName>Helper component proteinase</fullName>
            <shortName>HC-pro</shortName>
            <ecNumber evidence="23 24">3.4.22.45</ecNumber>
        </recommendedName>
    </component>
    <component>
        <recommendedName>
            <fullName>Protein P3</fullName>
        </recommendedName>
    </component>
    <component>
        <recommendedName>
            <fullName>6 kDa protein 1</fullName>
            <shortName>6K1</shortName>
        </recommendedName>
    </component>
    <component>
        <recommendedName>
            <fullName>Cytoplasmic inclusion protein</fullName>
            <shortName>CI</shortName>
            <ecNumber>3.6.4.-</ecNumber>
        </recommendedName>
    </component>
    <component>
        <recommendedName>
            <fullName>6 kDa protein 2</fullName>
            <shortName>6K2</shortName>
        </recommendedName>
    </component>
    <component>
        <recommendedName>
            <fullName>Viral genome-linked protein</fullName>
        </recommendedName>
        <alternativeName>
            <fullName>VPg</fullName>
        </alternativeName>
    </component>
    <component>
        <recommendedName>
            <fullName>Nuclear inclusion protein A</fullName>
            <shortName>NI-a</shortName>
            <shortName>NIa</shortName>
            <ecNumber evidence="22">3.4.22.44</ecNumber>
        </recommendedName>
        <alternativeName>
            <fullName>49 kDa proteinase</fullName>
            <shortName>49 kDa-Pro</shortName>
        </alternativeName>
        <alternativeName>
            <fullName>NIa-pro</fullName>
        </alternativeName>
    </component>
    <component>
        <recommendedName>
            <fullName>Nuclear inclusion protein B</fullName>
            <shortName>NI-b</shortName>
            <shortName>NIb</shortName>
            <ecNumber>2.7.7.48</ecNumber>
        </recommendedName>
        <alternativeName>
            <fullName>RNA-directed RNA polymerase</fullName>
        </alternativeName>
    </component>
    <component>
        <recommendedName>
            <fullName>Capsid protein</fullName>
            <shortName>CP</shortName>
        </recommendedName>
        <alternativeName>
            <fullName>Coat protein</fullName>
        </alternativeName>
    </component>
</protein>